<comment type="function">
    <text evidence="1">Catalyzes the radical-mediated insertion of two sulfur atoms into the C-6 and C-8 positions of the octanoyl moiety bound to the lipoyl domains of lipoate-dependent enzymes, thereby converting the octanoylated domains into lipoylated derivatives.</text>
</comment>
<comment type="catalytic activity">
    <reaction evidence="1">
        <text>[[Fe-S] cluster scaffold protein carrying a second [4Fe-4S](2+) cluster] + N(6)-octanoyl-L-lysyl-[protein] + 2 oxidized [2Fe-2S]-[ferredoxin] + 2 S-adenosyl-L-methionine + 4 H(+) = [[Fe-S] cluster scaffold protein] + N(6)-[(R)-dihydrolipoyl]-L-lysyl-[protein] + 4 Fe(3+) + 2 hydrogen sulfide + 2 5'-deoxyadenosine + 2 L-methionine + 2 reduced [2Fe-2S]-[ferredoxin]</text>
        <dbReference type="Rhea" id="RHEA:16585"/>
        <dbReference type="Rhea" id="RHEA-COMP:9928"/>
        <dbReference type="Rhea" id="RHEA-COMP:10000"/>
        <dbReference type="Rhea" id="RHEA-COMP:10001"/>
        <dbReference type="Rhea" id="RHEA-COMP:10475"/>
        <dbReference type="Rhea" id="RHEA-COMP:14568"/>
        <dbReference type="Rhea" id="RHEA-COMP:14569"/>
        <dbReference type="ChEBI" id="CHEBI:15378"/>
        <dbReference type="ChEBI" id="CHEBI:17319"/>
        <dbReference type="ChEBI" id="CHEBI:29034"/>
        <dbReference type="ChEBI" id="CHEBI:29919"/>
        <dbReference type="ChEBI" id="CHEBI:33722"/>
        <dbReference type="ChEBI" id="CHEBI:33737"/>
        <dbReference type="ChEBI" id="CHEBI:33738"/>
        <dbReference type="ChEBI" id="CHEBI:57844"/>
        <dbReference type="ChEBI" id="CHEBI:59789"/>
        <dbReference type="ChEBI" id="CHEBI:78809"/>
        <dbReference type="ChEBI" id="CHEBI:83100"/>
        <dbReference type="EC" id="2.8.1.8"/>
    </reaction>
</comment>
<comment type="cofactor">
    <cofactor evidence="1">
        <name>[4Fe-4S] cluster</name>
        <dbReference type="ChEBI" id="CHEBI:49883"/>
    </cofactor>
    <text evidence="1">Binds 2 [4Fe-4S] clusters per subunit. One cluster is coordinated with 3 cysteines and an exchangeable S-adenosyl-L-methionine.</text>
</comment>
<comment type="pathway">
    <text evidence="1">Protein modification; protein lipoylation via endogenous pathway; protein N(6)-(lipoyl)lysine from octanoyl-[acyl-carrier-protein].</text>
</comment>
<comment type="subcellular location">
    <subcellularLocation>
        <location evidence="1">Cytoplasm</location>
    </subcellularLocation>
</comment>
<comment type="similarity">
    <text evidence="1">Belongs to the radical SAM superfamily. Lipoyl synthase family.</text>
</comment>
<gene>
    <name evidence="1" type="primary">lipA</name>
    <name type="ordered locus">SAHV_0919</name>
</gene>
<evidence type="ECO:0000255" key="1">
    <source>
        <dbReference type="HAMAP-Rule" id="MF_00206"/>
    </source>
</evidence>
<evidence type="ECO:0000255" key="2">
    <source>
        <dbReference type="PROSITE-ProRule" id="PRU01266"/>
    </source>
</evidence>
<evidence type="ECO:0000256" key="3">
    <source>
        <dbReference type="SAM" id="MobiDB-lite"/>
    </source>
</evidence>
<accession>A7X0C7</accession>
<protein>
    <recommendedName>
        <fullName evidence="1">Lipoyl synthase</fullName>
        <ecNumber evidence="1">2.8.1.8</ecNumber>
    </recommendedName>
    <alternativeName>
        <fullName evidence="1">Lip-syn</fullName>
        <shortName evidence="1">LS</shortName>
    </alternativeName>
    <alternativeName>
        <fullName evidence="1">Lipoate synthase</fullName>
    </alternativeName>
    <alternativeName>
        <fullName evidence="1">Lipoic acid synthase</fullName>
    </alternativeName>
    <alternativeName>
        <fullName evidence="1">Sulfur insertion protein LipA</fullName>
    </alternativeName>
</protein>
<name>LIPA_STAA1</name>
<feature type="chain" id="PRO_1000012287" description="Lipoyl synthase">
    <location>
        <begin position="1"/>
        <end position="305"/>
    </location>
</feature>
<feature type="domain" description="Radical SAM core" evidence="2">
    <location>
        <begin position="54"/>
        <end position="270"/>
    </location>
</feature>
<feature type="region of interest" description="Disordered" evidence="3">
    <location>
        <begin position="283"/>
        <end position="305"/>
    </location>
</feature>
<feature type="compositionally biased region" description="Basic and acidic residues" evidence="3">
    <location>
        <begin position="283"/>
        <end position="298"/>
    </location>
</feature>
<feature type="binding site" evidence="1">
    <location>
        <position position="41"/>
    </location>
    <ligand>
        <name>[4Fe-4S] cluster</name>
        <dbReference type="ChEBI" id="CHEBI:49883"/>
        <label>1</label>
    </ligand>
</feature>
<feature type="binding site" evidence="1">
    <location>
        <position position="46"/>
    </location>
    <ligand>
        <name>[4Fe-4S] cluster</name>
        <dbReference type="ChEBI" id="CHEBI:49883"/>
        <label>1</label>
    </ligand>
</feature>
<feature type="binding site" evidence="1">
    <location>
        <position position="52"/>
    </location>
    <ligand>
        <name>[4Fe-4S] cluster</name>
        <dbReference type="ChEBI" id="CHEBI:49883"/>
        <label>1</label>
    </ligand>
</feature>
<feature type="binding site" evidence="1">
    <location>
        <position position="68"/>
    </location>
    <ligand>
        <name>[4Fe-4S] cluster</name>
        <dbReference type="ChEBI" id="CHEBI:49883"/>
        <label>2</label>
        <note>4Fe-4S-S-AdoMet</note>
    </ligand>
</feature>
<feature type="binding site" evidence="1">
    <location>
        <position position="72"/>
    </location>
    <ligand>
        <name>[4Fe-4S] cluster</name>
        <dbReference type="ChEBI" id="CHEBI:49883"/>
        <label>2</label>
        <note>4Fe-4S-S-AdoMet</note>
    </ligand>
</feature>
<feature type="binding site" evidence="1">
    <location>
        <position position="75"/>
    </location>
    <ligand>
        <name>[4Fe-4S] cluster</name>
        <dbReference type="ChEBI" id="CHEBI:49883"/>
        <label>2</label>
        <note>4Fe-4S-S-AdoMet</note>
    </ligand>
</feature>
<feature type="binding site" evidence="1">
    <location>
        <position position="281"/>
    </location>
    <ligand>
        <name>[4Fe-4S] cluster</name>
        <dbReference type="ChEBI" id="CHEBI:49883"/>
        <label>1</label>
    </ligand>
</feature>
<reference key="1">
    <citation type="journal article" date="2008" name="Antimicrob. Agents Chemother.">
        <title>Mutated response regulator graR is responsible for phenotypic conversion of Staphylococcus aureus from heterogeneous vancomycin-intermediate resistance to vancomycin-intermediate resistance.</title>
        <authorList>
            <person name="Neoh H.-M."/>
            <person name="Cui L."/>
            <person name="Yuzawa H."/>
            <person name="Takeuchi F."/>
            <person name="Matsuo M."/>
            <person name="Hiramatsu K."/>
        </authorList>
    </citation>
    <scope>NUCLEOTIDE SEQUENCE [LARGE SCALE GENOMIC DNA]</scope>
    <source>
        <strain>Mu3 / ATCC 700698</strain>
    </source>
</reference>
<proteinExistence type="inferred from homology"/>
<sequence>MATKNEEILRKPDWLKIKLNTNENYTGLKKMMREKNLNTVCEEAKCPNIHECWGARRTATFMILGAVCTRACRFCAVKTGLPNELDLNEPERVAESVELMNLKHVVITAVARDDLRDAGSNVYAETVRKVRERNPFTTIEILPSDMGGDYDALETLMASRPDILNHNIETVRRLTPRVRARATYDRTLEFLRRSKELQPDIPTKSSIMVGLGETIEEIYETMDDLRANDVDILTIGQYLQPSRKHLKVQKYYTPLEFGKLRKVAMDKGFKHCQAGPLVRSSYHADEQVNEAAKEKQRQGEAQLNS</sequence>
<organism>
    <name type="scientific">Staphylococcus aureus (strain Mu3 / ATCC 700698)</name>
    <dbReference type="NCBI Taxonomy" id="418127"/>
    <lineage>
        <taxon>Bacteria</taxon>
        <taxon>Bacillati</taxon>
        <taxon>Bacillota</taxon>
        <taxon>Bacilli</taxon>
        <taxon>Bacillales</taxon>
        <taxon>Staphylococcaceae</taxon>
        <taxon>Staphylococcus</taxon>
    </lineage>
</organism>
<keyword id="KW-0004">4Fe-4S</keyword>
<keyword id="KW-0963">Cytoplasm</keyword>
<keyword id="KW-0408">Iron</keyword>
<keyword id="KW-0411">Iron-sulfur</keyword>
<keyword id="KW-0479">Metal-binding</keyword>
<keyword id="KW-0949">S-adenosyl-L-methionine</keyword>
<keyword id="KW-0808">Transferase</keyword>
<dbReference type="EC" id="2.8.1.8" evidence="1"/>
<dbReference type="EMBL" id="AP009324">
    <property type="protein sequence ID" value="BAF77802.1"/>
    <property type="molecule type" value="Genomic_DNA"/>
</dbReference>
<dbReference type="RefSeq" id="WP_000201875.1">
    <property type="nucleotide sequence ID" value="NZ_CTYB01000028.1"/>
</dbReference>
<dbReference type="SMR" id="A7X0C7"/>
<dbReference type="GeneID" id="98345243"/>
<dbReference type="KEGG" id="saw:SAHV_0919"/>
<dbReference type="HOGENOM" id="CLU_033144_2_1_9"/>
<dbReference type="GO" id="GO:0005737">
    <property type="term" value="C:cytoplasm"/>
    <property type="evidence" value="ECO:0007669"/>
    <property type="project" value="UniProtKB-SubCell"/>
</dbReference>
<dbReference type="GO" id="GO:0051539">
    <property type="term" value="F:4 iron, 4 sulfur cluster binding"/>
    <property type="evidence" value="ECO:0007669"/>
    <property type="project" value="UniProtKB-UniRule"/>
</dbReference>
<dbReference type="GO" id="GO:0016992">
    <property type="term" value="F:lipoate synthase activity"/>
    <property type="evidence" value="ECO:0007669"/>
    <property type="project" value="UniProtKB-UniRule"/>
</dbReference>
<dbReference type="GO" id="GO:0046872">
    <property type="term" value="F:metal ion binding"/>
    <property type="evidence" value="ECO:0007669"/>
    <property type="project" value="UniProtKB-KW"/>
</dbReference>
<dbReference type="CDD" id="cd01335">
    <property type="entry name" value="Radical_SAM"/>
    <property type="match status" value="1"/>
</dbReference>
<dbReference type="FunFam" id="3.20.20.70:FF:000040">
    <property type="entry name" value="Lipoyl synthase"/>
    <property type="match status" value="1"/>
</dbReference>
<dbReference type="Gene3D" id="3.20.20.70">
    <property type="entry name" value="Aldolase class I"/>
    <property type="match status" value="1"/>
</dbReference>
<dbReference type="HAMAP" id="MF_00206">
    <property type="entry name" value="Lipoyl_synth"/>
    <property type="match status" value="1"/>
</dbReference>
<dbReference type="InterPro" id="IPR013785">
    <property type="entry name" value="Aldolase_TIM"/>
</dbReference>
<dbReference type="InterPro" id="IPR006638">
    <property type="entry name" value="Elp3/MiaA/NifB-like_rSAM"/>
</dbReference>
<dbReference type="InterPro" id="IPR031691">
    <property type="entry name" value="LIAS_N"/>
</dbReference>
<dbReference type="InterPro" id="IPR003698">
    <property type="entry name" value="Lipoyl_synth"/>
</dbReference>
<dbReference type="InterPro" id="IPR007197">
    <property type="entry name" value="rSAM"/>
</dbReference>
<dbReference type="NCBIfam" id="TIGR00510">
    <property type="entry name" value="lipA"/>
    <property type="match status" value="1"/>
</dbReference>
<dbReference type="NCBIfam" id="NF004019">
    <property type="entry name" value="PRK05481.1"/>
    <property type="match status" value="1"/>
</dbReference>
<dbReference type="NCBIfam" id="NF009544">
    <property type="entry name" value="PRK12928.1"/>
    <property type="match status" value="1"/>
</dbReference>
<dbReference type="PANTHER" id="PTHR10949">
    <property type="entry name" value="LIPOYL SYNTHASE"/>
    <property type="match status" value="1"/>
</dbReference>
<dbReference type="PANTHER" id="PTHR10949:SF0">
    <property type="entry name" value="LIPOYL SYNTHASE, MITOCHONDRIAL"/>
    <property type="match status" value="1"/>
</dbReference>
<dbReference type="Pfam" id="PF16881">
    <property type="entry name" value="LIAS_N"/>
    <property type="match status" value="1"/>
</dbReference>
<dbReference type="Pfam" id="PF04055">
    <property type="entry name" value="Radical_SAM"/>
    <property type="match status" value="1"/>
</dbReference>
<dbReference type="PIRSF" id="PIRSF005963">
    <property type="entry name" value="Lipoyl_synth"/>
    <property type="match status" value="1"/>
</dbReference>
<dbReference type="SFLD" id="SFLDF00271">
    <property type="entry name" value="lipoyl_synthase"/>
    <property type="match status" value="1"/>
</dbReference>
<dbReference type="SFLD" id="SFLDS00029">
    <property type="entry name" value="Radical_SAM"/>
    <property type="match status" value="1"/>
</dbReference>
<dbReference type="SMART" id="SM00729">
    <property type="entry name" value="Elp3"/>
    <property type="match status" value="1"/>
</dbReference>
<dbReference type="SUPFAM" id="SSF102114">
    <property type="entry name" value="Radical SAM enzymes"/>
    <property type="match status" value="1"/>
</dbReference>
<dbReference type="PROSITE" id="PS51918">
    <property type="entry name" value="RADICAL_SAM"/>
    <property type="match status" value="1"/>
</dbReference>